<evidence type="ECO:0000255" key="1">
    <source>
        <dbReference type="HAMAP-Rule" id="MF_00539"/>
    </source>
</evidence>
<evidence type="ECO:0000256" key="2">
    <source>
        <dbReference type="SAM" id="MobiDB-lite"/>
    </source>
</evidence>
<evidence type="ECO:0000305" key="3"/>
<protein>
    <recommendedName>
        <fullName evidence="1">Large ribosomal subunit protein bL27</fullName>
    </recommendedName>
    <alternativeName>
        <fullName evidence="3">50S ribosomal protein L27</fullName>
    </alternativeName>
</protein>
<gene>
    <name evidence="1" type="primary">rpmA</name>
    <name type="ordered locus">VCM66_0421</name>
</gene>
<keyword id="KW-0687">Ribonucleoprotein</keyword>
<keyword id="KW-0689">Ribosomal protein</keyword>
<sequence length="86" mass="9254">MAHKKAGGSTRNGRDSESKRLGVKRFGGESVLAGNIIVRQRGTKFHAGTNVGIGKDHTLFALSDGKVKFEVKGPNNRKFVSIETAE</sequence>
<reference key="1">
    <citation type="journal article" date="2008" name="PLoS ONE">
        <title>A recalibrated molecular clock and independent origins for the cholera pandemic clones.</title>
        <authorList>
            <person name="Feng L."/>
            <person name="Reeves P.R."/>
            <person name="Lan R."/>
            <person name="Ren Y."/>
            <person name="Gao C."/>
            <person name="Zhou Z."/>
            <person name="Ren Y."/>
            <person name="Cheng J."/>
            <person name="Wang W."/>
            <person name="Wang J."/>
            <person name="Qian W."/>
            <person name="Li D."/>
            <person name="Wang L."/>
        </authorList>
    </citation>
    <scope>NUCLEOTIDE SEQUENCE [LARGE SCALE GENOMIC DNA]</scope>
    <source>
        <strain>M66-2</strain>
    </source>
</reference>
<accession>C3LRG7</accession>
<organism>
    <name type="scientific">Vibrio cholerae serotype O1 (strain M66-2)</name>
    <dbReference type="NCBI Taxonomy" id="579112"/>
    <lineage>
        <taxon>Bacteria</taxon>
        <taxon>Pseudomonadati</taxon>
        <taxon>Pseudomonadota</taxon>
        <taxon>Gammaproteobacteria</taxon>
        <taxon>Vibrionales</taxon>
        <taxon>Vibrionaceae</taxon>
        <taxon>Vibrio</taxon>
    </lineage>
</organism>
<comment type="similarity">
    <text evidence="1">Belongs to the bacterial ribosomal protein bL27 family.</text>
</comment>
<proteinExistence type="inferred from homology"/>
<name>RL27_VIBCM</name>
<feature type="chain" id="PRO_1000146560" description="Large ribosomal subunit protein bL27">
    <location>
        <begin position="1"/>
        <end position="86"/>
    </location>
</feature>
<feature type="region of interest" description="Disordered" evidence="2">
    <location>
        <begin position="1"/>
        <end position="22"/>
    </location>
</feature>
<dbReference type="EMBL" id="CP001233">
    <property type="protein sequence ID" value="ACP04747.1"/>
    <property type="molecule type" value="Genomic_DNA"/>
</dbReference>
<dbReference type="RefSeq" id="WP_000940599.1">
    <property type="nucleotide sequence ID" value="NC_012578.1"/>
</dbReference>
<dbReference type="SMR" id="C3LRG7"/>
<dbReference type="GeneID" id="89515415"/>
<dbReference type="KEGG" id="vcm:VCM66_0421"/>
<dbReference type="HOGENOM" id="CLU_095424_4_1_6"/>
<dbReference type="Proteomes" id="UP000001217">
    <property type="component" value="Chromosome I"/>
</dbReference>
<dbReference type="GO" id="GO:0022625">
    <property type="term" value="C:cytosolic large ribosomal subunit"/>
    <property type="evidence" value="ECO:0007669"/>
    <property type="project" value="TreeGrafter"/>
</dbReference>
<dbReference type="GO" id="GO:0003735">
    <property type="term" value="F:structural constituent of ribosome"/>
    <property type="evidence" value="ECO:0007669"/>
    <property type="project" value="InterPro"/>
</dbReference>
<dbReference type="GO" id="GO:0006412">
    <property type="term" value="P:translation"/>
    <property type="evidence" value="ECO:0007669"/>
    <property type="project" value="UniProtKB-UniRule"/>
</dbReference>
<dbReference type="FunFam" id="2.40.50.100:FF:000001">
    <property type="entry name" value="50S ribosomal protein L27"/>
    <property type="match status" value="1"/>
</dbReference>
<dbReference type="Gene3D" id="2.40.50.100">
    <property type="match status" value="1"/>
</dbReference>
<dbReference type="HAMAP" id="MF_00539">
    <property type="entry name" value="Ribosomal_bL27"/>
    <property type="match status" value="1"/>
</dbReference>
<dbReference type="InterPro" id="IPR001684">
    <property type="entry name" value="Ribosomal_bL27"/>
</dbReference>
<dbReference type="InterPro" id="IPR018261">
    <property type="entry name" value="Ribosomal_bL27_CS"/>
</dbReference>
<dbReference type="NCBIfam" id="TIGR00062">
    <property type="entry name" value="L27"/>
    <property type="match status" value="1"/>
</dbReference>
<dbReference type="PANTHER" id="PTHR15893:SF0">
    <property type="entry name" value="LARGE RIBOSOMAL SUBUNIT PROTEIN BL27M"/>
    <property type="match status" value="1"/>
</dbReference>
<dbReference type="PANTHER" id="PTHR15893">
    <property type="entry name" value="RIBOSOMAL PROTEIN L27"/>
    <property type="match status" value="1"/>
</dbReference>
<dbReference type="Pfam" id="PF01016">
    <property type="entry name" value="Ribosomal_L27"/>
    <property type="match status" value="1"/>
</dbReference>
<dbReference type="PRINTS" id="PR00063">
    <property type="entry name" value="RIBOSOMALL27"/>
</dbReference>
<dbReference type="SUPFAM" id="SSF110324">
    <property type="entry name" value="Ribosomal L27 protein-like"/>
    <property type="match status" value="1"/>
</dbReference>
<dbReference type="PROSITE" id="PS00831">
    <property type="entry name" value="RIBOSOMAL_L27"/>
    <property type="match status" value="1"/>
</dbReference>